<feature type="chain" id="PRO_1000147293" description="Nucleotide-binding protein Cagg_1607">
    <location>
        <begin position="1"/>
        <end position="165"/>
    </location>
</feature>
<dbReference type="EMBL" id="CP001337">
    <property type="protein sequence ID" value="ACL24508.1"/>
    <property type="molecule type" value="Genomic_DNA"/>
</dbReference>
<dbReference type="RefSeq" id="WP_015940367.1">
    <property type="nucleotide sequence ID" value="NC_011831.1"/>
</dbReference>
<dbReference type="SMR" id="B8G9Z3"/>
<dbReference type="STRING" id="326427.Cagg_1607"/>
<dbReference type="KEGG" id="cag:Cagg_1607"/>
<dbReference type="eggNOG" id="COG1666">
    <property type="taxonomic scope" value="Bacteria"/>
</dbReference>
<dbReference type="HOGENOM" id="CLU_099839_0_0_0"/>
<dbReference type="OrthoDB" id="9801447at2"/>
<dbReference type="Proteomes" id="UP000002508">
    <property type="component" value="Chromosome"/>
</dbReference>
<dbReference type="GO" id="GO:0005829">
    <property type="term" value="C:cytosol"/>
    <property type="evidence" value="ECO:0007669"/>
    <property type="project" value="TreeGrafter"/>
</dbReference>
<dbReference type="GO" id="GO:0000166">
    <property type="term" value="F:nucleotide binding"/>
    <property type="evidence" value="ECO:0007669"/>
    <property type="project" value="TreeGrafter"/>
</dbReference>
<dbReference type="CDD" id="cd11740">
    <property type="entry name" value="YajQ_like"/>
    <property type="match status" value="1"/>
</dbReference>
<dbReference type="Gene3D" id="3.30.70.860">
    <property type="match status" value="1"/>
</dbReference>
<dbReference type="Gene3D" id="3.30.70.990">
    <property type="entry name" value="YajQ-like, domain 2"/>
    <property type="match status" value="1"/>
</dbReference>
<dbReference type="HAMAP" id="MF_00632">
    <property type="entry name" value="YajQ"/>
    <property type="match status" value="1"/>
</dbReference>
<dbReference type="InterPro" id="IPR007551">
    <property type="entry name" value="DUF520"/>
</dbReference>
<dbReference type="InterPro" id="IPR035571">
    <property type="entry name" value="UPF0234-like_C"/>
</dbReference>
<dbReference type="InterPro" id="IPR035570">
    <property type="entry name" value="UPF0234_N"/>
</dbReference>
<dbReference type="InterPro" id="IPR036183">
    <property type="entry name" value="YajQ-like_sf"/>
</dbReference>
<dbReference type="NCBIfam" id="NF003819">
    <property type="entry name" value="PRK05412.1"/>
    <property type="match status" value="1"/>
</dbReference>
<dbReference type="PANTHER" id="PTHR30476">
    <property type="entry name" value="UPF0234 PROTEIN YAJQ"/>
    <property type="match status" value="1"/>
</dbReference>
<dbReference type="PANTHER" id="PTHR30476:SF0">
    <property type="entry name" value="UPF0234 PROTEIN YAJQ"/>
    <property type="match status" value="1"/>
</dbReference>
<dbReference type="Pfam" id="PF04461">
    <property type="entry name" value="DUF520"/>
    <property type="match status" value="1"/>
</dbReference>
<dbReference type="SUPFAM" id="SSF89963">
    <property type="entry name" value="YajQ-like"/>
    <property type="match status" value="2"/>
</dbReference>
<protein>
    <recommendedName>
        <fullName evidence="1">Nucleotide-binding protein Cagg_1607</fullName>
    </recommendedName>
</protein>
<accession>B8G9Z3</accession>
<evidence type="ECO:0000255" key="1">
    <source>
        <dbReference type="HAMAP-Rule" id="MF_00632"/>
    </source>
</evidence>
<organism>
    <name type="scientific">Chloroflexus aggregans (strain MD-66 / DSM 9485)</name>
    <dbReference type="NCBI Taxonomy" id="326427"/>
    <lineage>
        <taxon>Bacteria</taxon>
        <taxon>Bacillati</taxon>
        <taxon>Chloroflexota</taxon>
        <taxon>Chloroflexia</taxon>
        <taxon>Chloroflexales</taxon>
        <taxon>Chloroflexineae</taxon>
        <taxon>Chloroflexaceae</taxon>
        <taxon>Chloroflexus</taxon>
    </lineage>
</organism>
<reference key="1">
    <citation type="submission" date="2008-12" db="EMBL/GenBank/DDBJ databases">
        <title>Complete sequence of Chloroflexus aggregans DSM 9485.</title>
        <authorList>
            <consortium name="US DOE Joint Genome Institute"/>
            <person name="Lucas S."/>
            <person name="Copeland A."/>
            <person name="Lapidus A."/>
            <person name="Glavina del Rio T."/>
            <person name="Dalin E."/>
            <person name="Tice H."/>
            <person name="Pitluck S."/>
            <person name="Foster B."/>
            <person name="Larimer F."/>
            <person name="Land M."/>
            <person name="Hauser L."/>
            <person name="Kyrpides N."/>
            <person name="Mikhailova N."/>
            <person name="Bryant D.A."/>
            <person name="Richardson P."/>
        </authorList>
    </citation>
    <scope>NUCLEOTIDE SEQUENCE [LARGE SCALE GENOMIC DNA]</scope>
    <source>
        <strain>MD-66 / DSM 9485</strain>
    </source>
</reference>
<keyword id="KW-0547">Nucleotide-binding</keyword>
<proteinExistence type="inferred from homology"/>
<sequence>MPGENSFDIVSDFDQQELVNAVDQTLREVQTRYDLKDAGVTLTLSKTELIIEADSEMALRSVRDVLETKALRRKLSLKIFDYGKPTDASGGRVRQVVTLRRGIDSELAKKIAKMIRDRFPKVQPRIQGDALRVTGKSRDELQAVIAFLRERESEIPVPLQMTNYR</sequence>
<comment type="function">
    <text evidence="1">Nucleotide-binding protein.</text>
</comment>
<comment type="similarity">
    <text evidence="1">Belongs to the YajQ family.</text>
</comment>
<gene>
    <name type="ordered locus">Cagg_1607</name>
</gene>
<name>Y1607_CHLAD</name>